<organism>
    <name type="scientific">Caenorhabditis elegans</name>
    <dbReference type="NCBI Taxonomy" id="6239"/>
    <lineage>
        <taxon>Eukaryota</taxon>
        <taxon>Metazoa</taxon>
        <taxon>Ecdysozoa</taxon>
        <taxon>Nematoda</taxon>
        <taxon>Chromadorea</taxon>
        <taxon>Rhabditida</taxon>
        <taxon>Rhabditina</taxon>
        <taxon>Rhabditomorpha</taxon>
        <taxon>Rhabditoidea</taxon>
        <taxon>Rhabditidae</taxon>
        <taxon>Peloderinae</taxon>
        <taxon>Caenorhabditis</taxon>
    </lineage>
</organism>
<keyword id="KW-0238">DNA-binding</keyword>
<keyword id="KW-0479">Metal-binding</keyword>
<keyword id="KW-0539">Nucleus</keyword>
<keyword id="KW-1185">Reference proteome</keyword>
<keyword id="KW-0804">Transcription</keyword>
<keyword id="KW-0805">Transcription regulation</keyword>
<keyword id="KW-0862">Zinc</keyword>
<keyword id="KW-0863">Zinc-finger</keyword>
<sequence>MHSAKNEKCNACGGYRFSVNDGFKYCDRCGALFENFEELEEEEGGLQQTVGQGKVKVRKNDDQKRVRNNAAPVNLPKAQVMREALEKRSDFLQQQAIKGEELELPHDATPDYLYRLALRLFSFTQILAKSGHILVHELNFESRVQENILATFQKYLAHCQVAFCHSEQCGNDEHLRFVAVMENLRYEQEEREEKQRKRMAKRGKGVNALSKSAAAWTLLTQGNITEHLDIASDEDGDQDAQGGQQLDDLTLETTQNPDESIRVNDTTMGFVRKVTTALSKEALRRASQLILNLEMLVAILHSALMSSGYQTILTSDVVRWIREDRFRISRRSIRLIRQSQPERMKQGEVVKPTIVDYAEPFLRFPLYEIMRTCTIFHQSLKLASSMAPQSFESMSARLVDNLNLPSDILSRMLILESIIPCDVSPQLLKQVDVDMGYNCGQLAAMSPNVYYSGFLTSFGRKERGTQDADFCDEVLLSPDAKLIAYLLLTLRLTFQLDNAQCALQDDQYFDVDSWIHQLEMRIKCWQGHNMSLVMRSSSHVPEMVVDPPFGTNYLFHQEKGAPQVSCRRRQAGFQKCIPTEMSFNSTSTLPTVFDVRHMGLLTERCQMEALISPVKFQRTVLGNEIERDPLTFENVDRQSKNTFFKHFSAFKTTESCDTFEEYFPCAKNYLLFKRPDWIQNCTARQTHFNPVTGPIRFYLSNQSCDDLLGTAATSFSRRFQFLLDALSLIIGEDKKAVYAAFVMLEMHLTSSERIQSIRDDLLTSSPITLKCQKFRNSTHHIPRKYGVISEVPIDRIENLRYFRLSRQFFEHEEMPTTINMELIDYRNQEIRDSVTETEVQRAQNRIMKLCYEFEQFFGILAVKFW</sequence>
<comment type="function">
    <text evidence="1">Component of RNA polymerase I core factor complex that acts as a GTF2B/TFIIB-like factor and plays a key role in multiple steps during transcription initiation such as pre-initiation complex (PIC) assembly and postpolymerase recruitment events in polymerase I (Pol I) transcription. Binds rDNA promoters and plays a role in Pol I recruitment (By similarity).</text>
</comment>
<comment type="subcellular location">
    <subcellularLocation>
        <location evidence="1">Nucleus</location>
        <location evidence="1">Nucleolus</location>
    </subcellularLocation>
</comment>
<comment type="domain">
    <text evidence="1">Although it shares weak sequence similarity with GTF2B/TFIIB, displays a similar subdomain organization as GTF2B/TFIIB, with a N-terminal zinc finger, a connecting region (composed of B-reader and B-linker regions), followed by 2 cyclin folds.</text>
</comment>
<comment type="similarity">
    <text evidence="3">Belongs to the RRN7/TAF1B family.</text>
</comment>
<name>TAF1B_CAEEL</name>
<feature type="chain" id="PRO_0000416875" description="TATA box-binding protein-associated factor RNA polymerase I subunit B">
    <location>
        <begin position="1"/>
        <end position="865"/>
    </location>
</feature>
<feature type="zinc finger region" description="RRN7-type">
    <location>
        <begin position="1"/>
        <end position="33"/>
    </location>
</feature>
<feature type="region of interest" description="B-reader" evidence="1">
    <location>
        <begin position="35"/>
        <end position="99"/>
    </location>
</feature>
<feature type="region of interest" description="B-linker" evidence="1">
    <location>
        <begin position="100"/>
        <end position="111"/>
    </location>
</feature>
<feature type="region of interest" description="N-terminal cyclin fold" evidence="1">
    <location>
        <begin position="112"/>
        <end position="348"/>
    </location>
</feature>
<feature type="region of interest" description="Disordered" evidence="2">
    <location>
        <begin position="233"/>
        <end position="261"/>
    </location>
</feature>
<feature type="region of interest" description="C-terminal cyclin fold" evidence="1">
    <location>
        <begin position="349"/>
        <end position="496"/>
    </location>
</feature>
<feature type="compositionally biased region" description="Low complexity" evidence="2">
    <location>
        <begin position="239"/>
        <end position="248"/>
    </location>
</feature>
<feature type="compositionally biased region" description="Polar residues" evidence="2">
    <location>
        <begin position="252"/>
        <end position="261"/>
    </location>
</feature>
<feature type="binding site" evidence="1">
    <location>
        <position position="9"/>
    </location>
    <ligand>
        <name>Zn(2+)</name>
        <dbReference type="ChEBI" id="CHEBI:29105"/>
    </ligand>
</feature>
<feature type="binding site" evidence="1">
    <location>
        <position position="12"/>
    </location>
    <ligand>
        <name>Zn(2+)</name>
        <dbReference type="ChEBI" id="CHEBI:29105"/>
    </ligand>
</feature>
<feature type="binding site" evidence="1">
    <location>
        <position position="26"/>
    </location>
    <ligand>
        <name>Zn(2+)</name>
        <dbReference type="ChEBI" id="CHEBI:29105"/>
    </ligand>
</feature>
<feature type="binding site" evidence="1">
    <location>
        <position position="29"/>
    </location>
    <ligand>
        <name>Zn(2+)</name>
        <dbReference type="ChEBI" id="CHEBI:29105"/>
    </ligand>
</feature>
<gene>
    <name type="ORF">F23H11.2</name>
</gene>
<accession>O01914</accession>
<reference key="1">
    <citation type="journal article" date="1998" name="Science">
        <title>Genome sequence of the nematode C. elegans: a platform for investigating biology.</title>
        <authorList>
            <consortium name="The C. elegans sequencing consortium"/>
        </authorList>
    </citation>
    <scope>NUCLEOTIDE SEQUENCE [LARGE SCALE GENOMIC DNA]</scope>
    <source>
        <strain>Bristol N2</strain>
    </source>
</reference>
<evidence type="ECO:0000250" key="1"/>
<evidence type="ECO:0000256" key="2">
    <source>
        <dbReference type="SAM" id="MobiDB-lite"/>
    </source>
</evidence>
<evidence type="ECO:0000305" key="3"/>
<protein>
    <recommendedName>
        <fullName>TATA box-binding protein-associated factor RNA polymerase I subunit B</fullName>
    </recommendedName>
    <alternativeName>
        <fullName>TATA box-binding protein-associated factor 1B</fullName>
        <shortName>TBP-associated factor 1B</shortName>
    </alternativeName>
</protein>
<proteinExistence type="inferred from homology"/>
<dbReference type="EMBL" id="FO081212">
    <property type="protein sequence ID" value="CCD69943.1"/>
    <property type="molecule type" value="Genomic_DNA"/>
</dbReference>
<dbReference type="PIR" id="T34064">
    <property type="entry name" value="T34064"/>
</dbReference>
<dbReference type="RefSeq" id="NP_497287.2">
    <property type="nucleotide sequence ID" value="NM_064886.6"/>
</dbReference>
<dbReference type="BioGRID" id="40520">
    <property type="interactions" value="1"/>
</dbReference>
<dbReference type="FunCoup" id="O01914">
    <property type="interactions" value="1516"/>
</dbReference>
<dbReference type="IntAct" id="O01914">
    <property type="interactions" value="3"/>
</dbReference>
<dbReference type="MINT" id="O01914"/>
<dbReference type="STRING" id="6239.F23H11.2.1"/>
<dbReference type="PaxDb" id="6239-F23H11.2"/>
<dbReference type="EnsemblMetazoa" id="F23H11.2.1">
    <property type="protein sequence ID" value="F23H11.2.1"/>
    <property type="gene ID" value="WBGene00017758"/>
</dbReference>
<dbReference type="GeneID" id="175251"/>
<dbReference type="KEGG" id="cel:CELE_F23H11.2"/>
<dbReference type="UCSC" id="F23H11.2">
    <property type="organism name" value="c. elegans"/>
</dbReference>
<dbReference type="AGR" id="WB:WBGene00017758"/>
<dbReference type="CTD" id="175251"/>
<dbReference type="WormBase" id="F23H11.2">
    <property type="protein sequence ID" value="CE34542"/>
    <property type="gene ID" value="WBGene00017758"/>
</dbReference>
<dbReference type="eggNOG" id="ENOG502SDRV">
    <property type="taxonomic scope" value="Eukaryota"/>
</dbReference>
<dbReference type="HOGENOM" id="CLU_015505_0_0_1"/>
<dbReference type="InParanoid" id="O01914"/>
<dbReference type="OMA" id="WIHQLEM"/>
<dbReference type="OrthoDB" id="10069252at2759"/>
<dbReference type="Reactome" id="R-CEL-5250924">
    <property type="pathway name" value="B-WICH complex positively regulates rRNA expression"/>
</dbReference>
<dbReference type="Reactome" id="R-CEL-73772">
    <property type="pathway name" value="RNA Polymerase I Promoter Escape"/>
</dbReference>
<dbReference type="PRO" id="PR:O01914"/>
<dbReference type="Proteomes" id="UP000001940">
    <property type="component" value="Chromosome III"/>
</dbReference>
<dbReference type="Bgee" id="WBGene00017758">
    <property type="expression patterns" value="Expressed in germ line (C elegans) and 4 other cell types or tissues"/>
</dbReference>
<dbReference type="GO" id="GO:0070860">
    <property type="term" value="C:RNA polymerase I core factor complex"/>
    <property type="evidence" value="ECO:0000318"/>
    <property type="project" value="GO_Central"/>
</dbReference>
<dbReference type="GO" id="GO:0005668">
    <property type="term" value="C:RNA polymerase transcription factor SL1 complex"/>
    <property type="evidence" value="ECO:0000318"/>
    <property type="project" value="GO_Central"/>
</dbReference>
<dbReference type="GO" id="GO:0001164">
    <property type="term" value="F:RNA polymerase I core promoter sequence-specific DNA binding"/>
    <property type="evidence" value="ECO:0000250"/>
    <property type="project" value="UniProtKB"/>
</dbReference>
<dbReference type="GO" id="GO:0008270">
    <property type="term" value="F:zinc ion binding"/>
    <property type="evidence" value="ECO:0007669"/>
    <property type="project" value="UniProtKB-KW"/>
</dbReference>
<dbReference type="GO" id="GO:0042790">
    <property type="term" value="P:nucleolar large rRNA transcription by RNA polymerase I"/>
    <property type="evidence" value="ECO:0000318"/>
    <property type="project" value="GO_Central"/>
</dbReference>
<dbReference type="GO" id="GO:0001188">
    <property type="term" value="P:RNA polymerase I preinitiation complex assembly"/>
    <property type="evidence" value="ECO:0000250"/>
    <property type="project" value="UniProtKB"/>
</dbReference>
<dbReference type="InterPro" id="IPR033599">
    <property type="entry name" value="TAF1B/Rrn7"/>
</dbReference>
<dbReference type="InterPro" id="IPR021752">
    <property type="entry name" value="TF_Rrn7_Zf"/>
</dbReference>
<dbReference type="PANTHER" id="PTHR31576">
    <property type="entry name" value="TATA BOX-BINDING PROTEIN-ASSOCIATED FACTOR RNA POLYMERASE I SUBUNIT B"/>
    <property type="match status" value="1"/>
</dbReference>
<dbReference type="PANTHER" id="PTHR31576:SF2">
    <property type="entry name" value="TATA BOX-BINDING PROTEIN-ASSOCIATED FACTOR RNA POLYMERASE I SUBUNIT B"/>
    <property type="match status" value="1"/>
</dbReference>
<dbReference type="Pfam" id="PF11781">
    <property type="entry name" value="Zn_ribbon_RRN7"/>
    <property type="match status" value="1"/>
</dbReference>